<organism>
    <name type="scientific">Saccharomyces cerevisiae (strain ATCC 204508 / S288c)</name>
    <name type="common">Baker's yeast</name>
    <dbReference type="NCBI Taxonomy" id="559292"/>
    <lineage>
        <taxon>Eukaryota</taxon>
        <taxon>Fungi</taxon>
        <taxon>Dikarya</taxon>
        <taxon>Ascomycota</taxon>
        <taxon>Saccharomycotina</taxon>
        <taxon>Saccharomycetes</taxon>
        <taxon>Saccharomycetales</taxon>
        <taxon>Saccharomycetaceae</taxon>
        <taxon>Saccharomyces</taxon>
    </lineage>
</organism>
<gene>
    <name type="ordered locus">YJR015W</name>
    <name type="ORF">J1448</name>
</gene>
<proteinExistence type="evidence at protein level"/>
<dbReference type="EMBL" id="X87611">
    <property type="protein sequence ID" value="CAA60938.1"/>
    <property type="molecule type" value="Genomic_DNA"/>
</dbReference>
<dbReference type="EMBL" id="Z49515">
    <property type="protein sequence ID" value="CAA89539.1"/>
    <property type="molecule type" value="Genomic_DNA"/>
</dbReference>
<dbReference type="EMBL" id="AY723836">
    <property type="protein sequence ID" value="AAU09753.1"/>
    <property type="molecule type" value="Genomic_DNA"/>
</dbReference>
<dbReference type="EMBL" id="BK006943">
    <property type="protein sequence ID" value="DAA08807.1"/>
    <property type="molecule type" value="Genomic_DNA"/>
</dbReference>
<dbReference type="PIR" id="S55204">
    <property type="entry name" value="S55204"/>
</dbReference>
<dbReference type="RefSeq" id="NP_012549.3">
    <property type="nucleotide sequence ID" value="NM_001181673.3"/>
</dbReference>
<dbReference type="BioGRID" id="33771">
    <property type="interactions" value="49"/>
</dbReference>
<dbReference type="DIP" id="DIP-1889N"/>
<dbReference type="FunCoup" id="P47090">
    <property type="interactions" value="64"/>
</dbReference>
<dbReference type="IntAct" id="P47090">
    <property type="interactions" value="7"/>
</dbReference>
<dbReference type="MINT" id="P47090"/>
<dbReference type="STRING" id="4932.YJR015W"/>
<dbReference type="TCDB" id="9.B.316.1.1">
    <property type="family name" value="the nitrosoguanidine resistance or duf3533 (ngr) family"/>
</dbReference>
<dbReference type="iPTMnet" id="P47090"/>
<dbReference type="PaxDb" id="4932-YJR015W"/>
<dbReference type="PeptideAtlas" id="P47090"/>
<dbReference type="EnsemblFungi" id="YJR015W_mRNA">
    <property type="protein sequence ID" value="YJR015W"/>
    <property type="gene ID" value="YJR015W"/>
</dbReference>
<dbReference type="GeneID" id="853472"/>
<dbReference type="KEGG" id="sce:YJR015W"/>
<dbReference type="AGR" id="SGD:S000003776"/>
<dbReference type="SGD" id="S000003776">
    <property type="gene designation" value="YJR015W"/>
</dbReference>
<dbReference type="VEuPathDB" id="FungiDB:YJR015W"/>
<dbReference type="eggNOG" id="ENOG502QUA0">
    <property type="taxonomic scope" value="Eukaryota"/>
</dbReference>
<dbReference type="GeneTree" id="ENSGT00940000176467"/>
<dbReference type="HOGENOM" id="CLU_020178_1_0_1"/>
<dbReference type="InParanoid" id="P47090"/>
<dbReference type="OMA" id="WTMVNLR"/>
<dbReference type="OrthoDB" id="2140105at2759"/>
<dbReference type="BioCyc" id="YEAST:G3O-31660-MONOMER"/>
<dbReference type="BioGRID-ORCS" id="853472">
    <property type="hits" value="1 hit in 10 CRISPR screens"/>
</dbReference>
<dbReference type="PRO" id="PR:P47090"/>
<dbReference type="Proteomes" id="UP000002311">
    <property type="component" value="Chromosome X"/>
</dbReference>
<dbReference type="RNAct" id="P47090">
    <property type="molecule type" value="protein"/>
</dbReference>
<dbReference type="GO" id="GO:0005737">
    <property type="term" value="C:cytoplasm"/>
    <property type="evidence" value="ECO:0007005"/>
    <property type="project" value="SGD"/>
</dbReference>
<dbReference type="GO" id="GO:0005783">
    <property type="term" value="C:endoplasmic reticulum"/>
    <property type="evidence" value="ECO:0007005"/>
    <property type="project" value="SGD"/>
</dbReference>
<dbReference type="GO" id="GO:0005789">
    <property type="term" value="C:endoplasmic reticulum membrane"/>
    <property type="evidence" value="ECO:0007669"/>
    <property type="project" value="UniProtKB-SubCell"/>
</dbReference>
<dbReference type="GO" id="GO:0016020">
    <property type="term" value="C:membrane"/>
    <property type="evidence" value="ECO:0000318"/>
    <property type="project" value="GO_Central"/>
</dbReference>
<dbReference type="InterPro" id="IPR022703">
    <property type="entry name" value="DUF3533"/>
</dbReference>
<dbReference type="InterPro" id="IPR053001">
    <property type="entry name" value="MNNG_permease-like"/>
</dbReference>
<dbReference type="PANTHER" id="PTHR34814">
    <property type="entry name" value="NITROSOGUANIDINE RESISTANCE PROTEIN SNG1"/>
    <property type="match status" value="1"/>
</dbReference>
<dbReference type="PANTHER" id="PTHR34814:SF1">
    <property type="entry name" value="NITROSOGUANIDINE RESISTANCE PROTEIN SNG1"/>
    <property type="match status" value="1"/>
</dbReference>
<dbReference type="Pfam" id="PF12051">
    <property type="entry name" value="DUF3533"/>
    <property type="match status" value="1"/>
</dbReference>
<reference key="1">
    <citation type="journal article" date="1996" name="EMBO J.">
        <title>Complete nucleotide sequence of Saccharomyces cerevisiae chromosome X.</title>
        <authorList>
            <person name="Galibert F."/>
            <person name="Alexandraki D."/>
            <person name="Baur A."/>
            <person name="Boles E."/>
            <person name="Chalwatzis N."/>
            <person name="Chuat J.-C."/>
            <person name="Coster F."/>
            <person name="Cziepluch C."/>
            <person name="de Haan M."/>
            <person name="Domdey H."/>
            <person name="Durand P."/>
            <person name="Entian K.-D."/>
            <person name="Gatius M."/>
            <person name="Goffeau A."/>
            <person name="Grivell L.A."/>
            <person name="Hennemann A."/>
            <person name="Herbert C.J."/>
            <person name="Heumann K."/>
            <person name="Hilger F."/>
            <person name="Hollenberg C.P."/>
            <person name="Huang M.-E."/>
            <person name="Jacq C."/>
            <person name="Jauniaux J.-C."/>
            <person name="Katsoulou C."/>
            <person name="Kirchrath L."/>
            <person name="Kleine K."/>
            <person name="Kordes E."/>
            <person name="Koetter P."/>
            <person name="Liebl S."/>
            <person name="Louis E.J."/>
            <person name="Manus V."/>
            <person name="Mewes H.-W."/>
            <person name="Miosga T."/>
            <person name="Obermaier B."/>
            <person name="Perea J."/>
            <person name="Pohl T.M."/>
            <person name="Portetelle D."/>
            <person name="Pujol A."/>
            <person name="Purnelle B."/>
            <person name="Ramezani Rad M."/>
            <person name="Rasmussen S.W."/>
            <person name="Rose M."/>
            <person name="Rossau R."/>
            <person name="Schaaff-Gerstenschlaeger I."/>
            <person name="Smits P.H.M."/>
            <person name="Scarcez T."/>
            <person name="Soriano N."/>
            <person name="To Van D."/>
            <person name="Tzermia M."/>
            <person name="Van Broekhoven A."/>
            <person name="Vandenbol M."/>
            <person name="Wedler H."/>
            <person name="von Wettstein D."/>
            <person name="Wambutt R."/>
            <person name="Zagulski M."/>
            <person name="Zollner A."/>
            <person name="Karpfinger-Hartl L."/>
        </authorList>
    </citation>
    <scope>NUCLEOTIDE SEQUENCE [LARGE SCALE GENOMIC DNA]</scope>
    <source>
        <strain>ATCC 204508 / S288c</strain>
    </source>
</reference>
<reference key="2">
    <citation type="journal article" date="2014" name="G3 (Bethesda)">
        <title>The reference genome sequence of Saccharomyces cerevisiae: Then and now.</title>
        <authorList>
            <person name="Engel S.R."/>
            <person name="Dietrich F.S."/>
            <person name="Fisk D.G."/>
            <person name="Binkley G."/>
            <person name="Balakrishnan R."/>
            <person name="Costanzo M.C."/>
            <person name="Dwight S.S."/>
            <person name="Hitz B.C."/>
            <person name="Karra K."/>
            <person name="Nash R.S."/>
            <person name="Weng S."/>
            <person name="Wong E.D."/>
            <person name="Lloyd P."/>
            <person name="Skrzypek M.S."/>
            <person name="Miyasato S.R."/>
            <person name="Simison M."/>
            <person name="Cherry J.M."/>
        </authorList>
    </citation>
    <scope>GENOME REANNOTATION</scope>
    <source>
        <strain>ATCC 204508 / S288c</strain>
    </source>
</reference>
<reference key="3">
    <citation type="journal article" date="2007" name="Genome Res.">
        <title>Approaching a complete repository of sequence-verified protein-encoding clones for Saccharomyces cerevisiae.</title>
        <authorList>
            <person name="Hu Y."/>
            <person name="Rolfs A."/>
            <person name="Bhullar B."/>
            <person name="Murthy T.V.S."/>
            <person name="Zhu C."/>
            <person name="Berger M.F."/>
            <person name="Camargo A.A."/>
            <person name="Kelley F."/>
            <person name="McCarron S."/>
            <person name="Jepson D."/>
            <person name="Richardson A."/>
            <person name="Raphael J."/>
            <person name="Moreira D."/>
            <person name="Taycher E."/>
            <person name="Zuo D."/>
            <person name="Mohr S."/>
            <person name="Kane M.F."/>
            <person name="Williamson J."/>
            <person name="Simpson A.J.G."/>
            <person name="Bulyk M.L."/>
            <person name="Harlow E."/>
            <person name="Marsischky G."/>
            <person name="Kolodner R.D."/>
            <person name="LaBaer J."/>
        </authorList>
    </citation>
    <scope>NUCLEOTIDE SEQUENCE [GENOMIC DNA]</scope>
    <source>
        <strain>ATCC 204508 / S288c</strain>
    </source>
</reference>
<reference key="4">
    <citation type="journal article" date="2003" name="Nature">
        <title>Global analysis of protein localization in budding yeast.</title>
        <authorList>
            <person name="Huh W.-K."/>
            <person name="Falvo J.V."/>
            <person name="Gerke L.C."/>
            <person name="Carroll A.S."/>
            <person name="Howson R.W."/>
            <person name="Weissman J.S."/>
            <person name="O'Shea E.K."/>
        </authorList>
    </citation>
    <scope>SUBCELLULAR LOCATION [LARGE SCALE ANALYSIS]</scope>
</reference>
<reference key="5">
    <citation type="journal article" date="2003" name="Nature">
        <title>Global analysis of protein expression in yeast.</title>
        <authorList>
            <person name="Ghaemmaghami S."/>
            <person name="Huh W.-K."/>
            <person name="Bower K."/>
            <person name="Howson R.W."/>
            <person name="Belle A."/>
            <person name="Dephoure N."/>
            <person name="O'Shea E.K."/>
            <person name="Weissman J.S."/>
        </authorList>
    </citation>
    <scope>LEVEL OF PROTEIN EXPRESSION [LARGE SCALE ANALYSIS]</scope>
</reference>
<reference key="6">
    <citation type="journal article" date="2006" name="Proc. Natl. Acad. Sci. U.S.A.">
        <title>A global topology map of the Saccharomyces cerevisiae membrane proteome.</title>
        <authorList>
            <person name="Kim H."/>
            <person name="Melen K."/>
            <person name="Oesterberg M."/>
            <person name="von Heijne G."/>
        </authorList>
    </citation>
    <scope>TOPOLOGY [LARGE SCALE ANALYSIS]</scope>
    <source>
        <strain>ATCC 208353 / W303-1A</strain>
    </source>
</reference>
<protein>
    <recommendedName>
        <fullName>Uncharacterized endoplasmic reticulum membrane protein YJR015W</fullName>
    </recommendedName>
</protein>
<feature type="chain" id="PRO_0000203085" description="Uncharacterized endoplasmic reticulum membrane protein YJR015W">
    <location>
        <begin position="1"/>
        <end position="510"/>
    </location>
</feature>
<feature type="topological domain" description="Lumenal" evidence="1">
    <location>
        <begin position="1"/>
        <end position="89"/>
    </location>
</feature>
<feature type="transmembrane region" description="Helical" evidence="1">
    <location>
        <begin position="90"/>
        <end position="110"/>
    </location>
</feature>
<feature type="topological domain" description="Cytoplasmic" evidence="1">
    <location>
        <begin position="111"/>
        <end position="123"/>
    </location>
</feature>
<feature type="transmembrane region" description="Helical" evidence="1">
    <location>
        <begin position="124"/>
        <end position="144"/>
    </location>
</feature>
<feature type="topological domain" description="Lumenal" evidence="1">
    <location>
        <begin position="145"/>
        <end position="312"/>
    </location>
</feature>
<feature type="transmembrane region" description="Helical" evidence="1">
    <location>
        <begin position="313"/>
        <end position="333"/>
    </location>
</feature>
<feature type="topological domain" description="Cytoplasmic" evidence="1">
    <location>
        <begin position="334"/>
        <end position="349"/>
    </location>
</feature>
<feature type="transmembrane region" description="Helical" evidence="1">
    <location>
        <begin position="350"/>
        <end position="370"/>
    </location>
</feature>
<feature type="topological domain" description="Lumenal" evidence="1">
    <location>
        <begin position="371"/>
        <end position="381"/>
    </location>
</feature>
<feature type="transmembrane region" description="Helical" evidence="1">
    <location>
        <begin position="382"/>
        <end position="402"/>
    </location>
</feature>
<feature type="topological domain" description="Cytoplasmic" evidence="1">
    <location>
        <begin position="403"/>
        <end position="416"/>
    </location>
</feature>
<feature type="transmembrane region" description="Helical" evidence="1">
    <location>
        <begin position="417"/>
        <end position="437"/>
    </location>
</feature>
<feature type="topological domain" description="Lumenal" evidence="1">
    <location>
        <begin position="438"/>
        <end position="474"/>
    </location>
</feature>
<feature type="transmembrane region" description="Helical" evidence="1">
    <location>
        <begin position="475"/>
        <end position="495"/>
    </location>
</feature>
<feature type="topological domain" description="Cytoplasmic" evidence="1">
    <location>
        <begin position="496"/>
        <end position="510"/>
    </location>
</feature>
<feature type="region of interest" description="Disordered" evidence="2">
    <location>
        <begin position="38"/>
        <end position="76"/>
    </location>
</feature>
<feature type="compositionally biased region" description="Basic and acidic residues" evidence="2">
    <location>
        <begin position="53"/>
        <end position="66"/>
    </location>
</feature>
<feature type="compositionally biased region" description="Low complexity" evidence="2">
    <location>
        <begin position="67"/>
        <end position="76"/>
    </location>
</feature>
<feature type="sequence conflict" description="In Ref. 3; AAU09753." evidence="5" ref="3">
    <original>F</original>
    <variation>S</variation>
    <location>
        <position position="324"/>
    </location>
</feature>
<evidence type="ECO:0000255" key="1"/>
<evidence type="ECO:0000256" key="2">
    <source>
        <dbReference type="SAM" id="MobiDB-lite"/>
    </source>
</evidence>
<evidence type="ECO:0000269" key="3">
    <source>
    </source>
</evidence>
<evidence type="ECO:0000269" key="4">
    <source>
    </source>
</evidence>
<evidence type="ECO:0000305" key="5"/>
<name>YJY5_YEAST</name>
<comment type="subcellular location">
    <subcellularLocation>
        <location evidence="3">Endoplasmic reticulum membrane</location>
        <topology evidence="3">Multi-pass membrane protein</topology>
    </subcellularLocation>
</comment>
<comment type="miscellaneous">
    <text evidence="4">Present with 639 molecules/cell in log phase SD medium.</text>
</comment>
<comment type="similarity">
    <text evidence="5">To yeast SNG1.</text>
</comment>
<accession>P47090</accession>
<accession>D6VWJ1</accession>
<accession>Q66R65</accession>
<sequence>MTSSLDDIEPTAYNNMEADEEYCRRNDIHDLSSVVGDAVSQGVPDMDGQTTDSSKDPEPNSEDKKAFPPSSGSFFSPNLQGQRKKVLLKFVFTNCLLAIICFTMFVLFWGALYDTSKYLHKVKLLVVIQEPPVVILDNNSSMVVPSISYALPTFINKIPCDWDIYNSPTFQAKFDVNTPQQVNDKVVDLVYDEKYWFAINIKPNATETLFESLINDTAPLFNSTLFNQVVYETGRDPTNLKSTILPVAQTIEEYYHTFYTLNYLPPLLTNITQVYRYALTNNARYIAAAGKYNYEYYDHRPFTDRILLAPTQIGVVYCLLLTFFQFLLYGPLHVEMAKVLRPANGLIYRIAMSWFTFFFASLFFCTTTAIFQVDFTKSFGRGGFVVYWMSTWLFMLAAGGANENAVMLVITLGPQYLGFWILSFVILNIAPSFFPLALNNNVYRYGYMMPVHNVIDIYRVIFFDVTRRKMGRNYGILVALIALNTALLPFVGKYASRKLKQKALVAAKQS</sequence>
<keyword id="KW-0256">Endoplasmic reticulum</keyword>
<keyword id="KW-0472">Membrane</keyword>
<keyword id="KW-1185">Reference proteome</keyword>
<keyword id="KW-0812">Transmembrane</keyword>
<keyword id="KW-1133">Transmembrane helix</keyword>